<proteinExistence type="inferred from homology"/>
<dbReference type="EC" id="5.3.1.1" evidence="1"/>
<dbReference type="EMBL" id="BA000031">
    <property type="protein sequence ID" value="BAC58502.1"/>
    <property type="molecule type" value="Genomic_DNA"/>
</dbReference>
<dbReference type="RefSeq" id="NP_796618.1">
    <property type="nucleotide sequence ID" value="NC_004603.1"/>
</dbReference>
<dbReference type="RefSeq" id="WP_005466271.1">
    <property type="nucleotide sequence ID" value="NC_004603.1"/>
</dbReference>
<dbReference type="SMR" id="Q87T31"/>
<dbReference type="GeneID" id="1187706"/>
<dbReference type="KEGG" id="vpa:VP0239"/>
<dbReference type="PATRIC" id="fig|223926.6.peg.230"/>
<dbReference type="eggNOG" id="COG0149">
    <property type="taxonomic scope" value="Bacteria"/>
</dbReference>
<dbReference type="HOGENOM" id="CLU_024251_2_1_6"/>
<dbReference type="UniPathway" id="UPA00109">
    <property type="reaction ID" value="UER00189"/>
</dbReference>
<dbReference type="UniPathway" id="UPA00138"/>
<dbReference type="Proteomes" id="UP000002493">
    <property type="component" value="Chromosome 1"/>
</dbReference>
<dbReference type="GO" id="GO:0005829">
    <property type="term" value="C:cytosol"/>
    <property type="evidence" value="ECO:0007669"/>
    <property type="project" value="TreeGrafter"/>
</dbReference>
<dbReference type="GO" id="GO:0004807">
    <property type="term" value="F:triose-phosphate isomerase activity"/>
    <property type="evidence" value="ECO:0007669"/>
    <property type="project" value="UniProtKB-UniRule"/>
</dbReference>
<dbReference type="GO" id="GO:0006094">
    <property type="term" value="P:gluconeogenesis"/>
    <property type="evidence" value="ECO:0007669"/>
    <property type="project" value="UniProtKB-UniRule"/>
</dbReference>
<dbReference type="GO" id="GO:0046166">
    <property type="term" value="P:glyceraldehyde-3-phosphate biosynthetic process"/>
    <property type="evidence" value="ECO:0007669"/>
    <property type="project" value="TreeGrafter"/>
</dbReference>
<dbReference type="GO" id="GO:0019563">
    <property type="term" value="P:glycerol catabolic process"/>
    <property type="evidence" value="ECO:0007669"/>
    <property type="project" value="TreeGrafter"/>
</dbReference>
<dbReference type="GO" id="GO:0006096">
    <property type="term" value="P:glycolytic process"/>
    <property type="evidence" value="ECO:0007669"/>
    <property type="project" value="UniProtKB-UniRule"/>
</dbReference>
<dbReference type="CDD" id="cd00311">
    <property type="entry name" value="TIM"/>
    <property type="match status" value="1"/>
</dbReference>
<dbReference type="FunFam" id="3.20.20.70:FF:000020">
    <property type="entry name" value="Triosephosphate isomerase"/>
    <property type="match status" value="1"/>
</dbReference>
<dbReference type="Gene3D" id="3.20.20.70">
    <property type="entry name" value="Aldolase class I"/>
    <property type="match status" value="1"/>
</dbReference>
<dbReference type="HAMAP" id="MF_00147_B">
    <property type="entry name" value="TIM_B"/>
    <property type="match status" value="1"/>
</dbReference>
<dbReference type="InterPro" id="IPR013785">
    <property type="entry name" value="Aldolase_TIM"/>
</dbReference>
<dbReference type="InterPro" id="IPR035990">
    <property type="entry name" value="TIM_sf"/>
</dbReference>
<dbReference type="InterPro" id="IPR022896">
    <property type="entry name" value="TrioseP_Isoase_bac/euk"/>
</dbReference>
<dbReference type="InterPro" id="IPR000652">
    <property type="entry name" value="Triosephosphate_isomerase"/>
</dbReference>
<dbReference type="InterPro" id="IPR020861">
    <property type="entry name" value="Triosephosphate_isomerase_AS"/>
</dbReference>
<dbReference type="NCBIfam" id="TIGR00419">
    <property type="entry name" value="tim"/>
    <property type="match status" value="1"/>
</dbReference>
<dbReference type="PANTHER" id="PTHR21139">
    <property type="entry name" value="TRIOSEPHOSPHATE ISOMERASE"/>
    <property type="match status" value="1"/>
</dbReference>
<dbReference type="PANTHER" id="PTHR21139:SF42">
    <property type="entry name" value="TRIOSEPHOSPHATE ISOMERASE"/>
    <property type="match status" value="1"/>
</dbReference>
<dbReference type="Pfam" id="PF00121">
    <property type="entry name" value="TIM"/>
    <property type="match status" value="1"/>
</dbReference>
<dbReference type="SUPFAM" id="SSF51351">
    <property type="entry name" value="Triosephosphate isomerase (TIM)"/>
    <property type="match status" value="1"/>
</dbReference>
<dbReference type="PROSITE" id="PS00171">
    <property type="entry name" value="TIM_1"/>
    <property type="match status" value="1"/>
</dbReference>
<dbReference type="PROSITE" id="PS51440">
    <property type="entry name" value="TIM_2"/>
    <property type="match status" value="1"/>
</dbReference>
<comment type="function">
    <text evidence="1">Involved in the gluconeogenesis. Catalyzes stereospecifically the conversion of dihydroxyacetone phosphate (DHAP) to D-glyceraldehyde-3-phosphate (G3P).</text>
</comment>
<comment type="catalytic activity">
    <reaction evidence="1">
        <text>D-glyceraldehyde 3-phosphate = dihydroxyacetone phosphate</text>
        <dbReference type="Rhea" id="RHEA:18585"/>
        <dbReference type="ChEBI" id="CHEBI:57642"/>
        <dbReference type="ChEBI" id="CHEBI:59776"/>
        <dbReference type="EC" id="5.3.1.1"/>
    </reaction>
</comment>
<comment type="pathway">
    <text evidence="1">Carbohydrate biosynthesis; gluconeogenesis.</text>
</comment>
<comment type="pathway">
    <text evidence="1">Carbohydrate degradation; glycolysis; D-glyceraldehyde 3-phosphate from glycerone phosphate: step 1/1.</text>
</comment>
<comment type="subunit">
    <text evidence="1">Homodimer.</text>
</comment>
<comment type="subcellular location">
    <subcellularLocation>
        <location evidence="1">Cytoplasm</location>
    </subcellularLocation>
</comment>
<comment type="similarity">
    <text evidence="1">Belongs to the triosephosphate isomerase family.</text>
</comment>
<feature type="chain" id="PRO_0000090315" description="Triosephosphate isomerase">
    <location>
        <begin position="1"/>
        <end position="256"/>
    </location>
</feature>
<feature type="active site" description="Electrophile" evidence="1">
    <location>
        <position position="97"/>
    </location>
</feature>
<feature type="active site" description="Proton acceptor" evidence="1">
    <location>
        <position position="169"/>
    </location>
</feature>
<feature type="binding site" evidence="1">
    <location>
        <begin position="9"/>
        <end position="11"/>
    </location>
    <ligand>
        <name>substrate</name>
    </ligand>
</feature>
<feature type="binding site" evidence="1">
    <location>
        <position position="175"/>
    </location>
    <ligand>
        <name>substrate</name>
    </ligand>
</feature>
<feature type="binding site" evidence="1">
    <location>
        <position position="214"/>
    </location>
    <ligand>
        <name>substrate</name>
    </ligand>
</feature>
<feature type="binding site" evidence="1">
    <location>
        <begin position="235"/>
        <end position="236"/>
    </location>
    <ligand>
        <name>substrate</name>
    </ligand>
</feature>
<accession>Q87T31</accession>
<sequence>MRRPVVMGNWKLNGSKAMVTELLTGLNAELEGVEGVDVAVAPPALYIDLAERLIAEGGNKIILGAQNTDLNNSGAFTGDMSPEMLKDFGATHIIIGHSERREYHNESDEFIAKKFNFLKENGLTPVFCIGESEAQNEAGETEAVCARQINAVIDTYGVEALNGAIIAYEPIWAIGTGKAATAEDAQRIHASIRALIAAKDEAVAAQVIIQYGGSVKPENAEAYFSQPDIDGALVGGASLDAKSFAAIAKAAAAAKA</sequence>
<reference key="1">
    <citation type="journal article" date="2003" name="Lancet">
        <title>Genome sequence of Vibrio parahaemolyticus: a pathogenic mechanism distinct from that of V. cholerae.</title>
        <authorList>
            <person name="Makino K."/>
            <person name="Oshima K."/>
            <person name="Kurokawa K."/>
            <person name="Yokoyama K."/>
            <person name="Uda T."/>
            <person name="Tagomori K."/>
            <person name="Iijima Y."/>
            <person name="Najima M."/>
            <person name="Nakano M."/>
            <person name="Yamashita A."/>
            <person name="Kubota Y."/>
            <person name="Kimura S."/>
            <person name="Yasunaga T."/>
            <person name="Honda T."/>
            <person name="Shinagawa H."/>
            <person name="Hattori M."/>
            <person name="Iida T."/>
        </authorList>
    </citation>
    <scope>NUCLEOTIDE SEQUENCE [LARGE SCALE GENOMIC DNA]</scope>
    <source>
        <strain>RIMD 2210633</strain>
    </source>
</reference>
<keyword id="KW-0963">Cytoplasm</keyword>
<keyword id="KW-0312">Gluconeogenesis</keyword>
<keyword id="KW-0324">Glycolysis</keyword>
<keyword id="KW-0413">Isomerase</keyword>
<gene>
    <name evidence="1" type="primary">tpiA</name>
    <name type="ordered locus">VP0239</name>
</gene>
<organism>
    <name type="scientific">Vibrio parahaemolyticus serotype O3:K6 (strain RIMD 2210633)</name>
    <dbReference type="NCBI Taxonomy" id="223926"/>
    <lineage>
        <taxon>Bacteria</taxon>
        <taxon>Pseudomonadati</taxon>
        <taxon>Pseudomonadota</taxon>
        <taxon>Gammaproteobacteria</taxon>
        <taxon>Vibrionales</taxon>
        <taxon>Vibrionaceae</taxon>
        <taxon>Vibrio</taxon>
    </lineage>
</organism>
<protein>
    <recommendedName>
        <fullName evidence="1">Triosephosphate isomerase</fullName>
        <shortName evidence="1">TIM</shortName>
        <shortName evidence="1">TPI</shortName>
        <ecNumber evidence="1">5.3.1.1</ecNumber>
    </recommendedName>
    <alternativeName>
        <fullName evidence="1">Triose-phosphate isomerase</fullName>
    </alternativeName>
</protein>
<name>TPIS_VIBPA</name>
<evidence type="ECO:0000255" key="1">
    <source>
        <dbReference type="HAMAP-Rule" id="MF_00147"/>
    </source>
</evidence>